<name>OPS3_BEAB2</name>
<comment type="function">
    <text evidence="4">Transcription factor involved in regulation of gene cluster that mediates the biosynthesis of oosporein, a metabolite required for fungal virulence that acts by evading host immunity to facilitate fungal multiplication in insects (PubMed:26305932). Binds oosporein cluster genes at a conserved 5'-CGGA-3' motif with the exception of OpS5 (PubMed:26305932). The presence of this motif in the OpS3 promoter would suggest the formation of a positive feedback loop for self-activation (PubMed:26305932).</text>
</comment>
<comment type="subcellular location">
    <subcellularLocation>
        <location evidence="2">Nucleus</location>
    </subcellularLocation>
</comment>
<comment type="disruption phenotype">
    <text evidence="4">With the exception of OpS5, disables the expression of other genes associated with oosporein biosynthesis (PubMed:26305932).</text>
</comment>
<sequence length="741" mass="81251">MFYTFNAVMTDVVSAGRPARGQSTTTRSRNTQQSAPTSQNFRACRRCRQHRIKCSEKPCEPCRANNSKCVWTEEKPTAAVLTPISPANLAANRPMMAPAAGSTITKPIASHYASPTYTDGEDGGGEPWPLQHPCSCAQHPNTPNSCPSQSGDIRQQQIPCSQHASPASNASKTFHQFLEGLGMAVTAEEGELHQFPPLPSAEEGKTSTAAAGLLPSAPTASETLNWDGQLYFVRLFWMSLAPLFPIMPESEFEALYAADGPYLLGQRTIEGALINGMTALGIQCAEATGSGARILSCSPTAASRSSIEYFRRCRDVLRDQDTSTTTCVHTIRCYILLTLYHLQANQLEKAYYLAGLGVRRAHMGRFHLTPAAHSSARVADDRIRVWWLLSWLDVYCSLQLGRPAAVQRSSNPCPPPSSPPMRFTPMHADVVSRKEASLDNYRFVLSKLTMIVVEALDDVPVFQSLEEMHGSSTAGQSMARLSETIRQLETALDELPEQLLTRHGSRTPTNNGQTHRSRPTCSTMPHTNRQVTSSASSAALTVGLPDWLQRQRLILELHYLDACLVLQRPFVLWKQICSSDASITKHAESAFSRACSVLSMLHSIYSRSDILDRLTMVLPFIWNAIITIAAYVFVGSADDDKKTQLLKAMNNALAILEPLARINPDSLKVYQISQALAAELREASGGTDVVAMPPPPSAATSTSTTFTDDLFKSTFTGSLDLDEFLNDEVTMTDDFSELYSF</sequence>
<gene>
    <name evidence="5" type="primary">OpS3</name>
    <name type="ORF">BBA_08181</name>
</gene>
<proteinExistence type="inferred from homology"/>
<dbReference type="EMBL" id="JH725181">
    <property type="protein sequence ID" value="EJP62794.1"/>
    <property type="molecule type" value="Genomic_DNA"/>
</dbReference>
<dbReference type="RefSeq" id="XP_008601500.1">
    <property type="nucleotide sequence ID" value="XM_008603278.1"/>
</dbReference>
<dbReference type="SMR" id="J4KLU1"/>
<dbReference type="STRING" id="655819.J4KLU1"/>
<dbReference type="GeneID" id="19891193"/>
<dbReference type="HOGENOM" id="CLU_374668_0_0_1"/>
<dbReference type="InParanoid" id="J4KLU1"/>
<dbReference type="OrthoDB" id="8175at474943"/>
<dbReference type="Proteomes" id="UP000002762">
    <property type="component" value="Unassembled WGS sequence"/>
</dbReference>
<dbReference type="GO" id="GO:0005634">
    <property type="term" value="C:nucleus"/>
    <property type="evidence" value="ECO:0007669"/>
    <property type="project" value="UniProtKB-SubCell"/>
</dbReference>
<dbReference type="GO" id="GO:0003677">
    <property type="term" value="F:DNA binding"/>
    <property type="evidence" value="ECO:0007669"/>
    <property type="project" value="UniProtKB-KW"/>
</dbReference>
<dbReference type="GO" id="GO:0000981">
    <property type="term" value="F:DNA-binding transcription factor activity, RNA polymerase II-specific"/>
    <property type="evidence" value="ECO:0007669"/>
    <property type="project" value="InterPro"/>
</dbReference>
<dbReference type="GO" id="GO:0008270">
    <property type="term" value="F:zinc ion binding"/>
    <property type="evidence" value="ECO:0007669"/>
    <property type="project" value="InterPro"/>
</dbReference>
<dbReference type="GO" id="GO:0006351">
    <property type="term" value="P:DNA-templated transcription"/>
    <property type="evidence" value="ECO:0007669"/>
    <property type="project" value="InterPro"/>
</dbReference>
<dbReference type="CDD" id="cd12148">
    <property type="entry name" value="fungal_TF_MHR"/>
    <property type="match status" value="1"/>
</dbReference>
<dbReference type="CDD" id="cd00067">
    <property type="entry name" value="GAL4"/>
    <property type="match status" value="1"/>
</dbReference>
<dbReference type="Gene3D" id="4.10.240.10">
    <property type="entry name" value="Zn(2)-C6 fungal-type DNA-binding domain"/>
    <property type="match status" value="1"/>
</dbReference>
<dbReference type="InterPro" id="IPR050987">
    <property type="entry name" value="AtrR-like"/>
</dbReference>
<dbReference type="InterPro" id="IPR007219">
    <property type="entry name" value="Transcription_factor_dom_fun"/>
</dbReference>
<dbReference type="InterPro" id="IPR036864">
    <property type="entry name" value="Zn2-C6_fun-type_DNA-bd_sf"/>
</dbReference>
<dbReference type="InterPro" id="IPR001138">
    <property type="entry name" value="Zn2Cys6_DnaBD"/>
</dbReference>
<dbReference type="PANTHER" id="PTHR46910:SF3">
    <property type="entry name" value="HALOTOLERANCE PROTEIN 9-RELATED"/>
    <property type="match status" value="1"/>
</dbReference>
<dbReference type="PANTHER" id="PTHR46910">
    <property type="entry name" value="TRANSCRIPTION FACTOR PDR1"/>
    <property type="match status" value="1"/>
</dbReference>
<dbReference type="Pfam" id="PF04082">
    <property type="entry name" value="Fungal_trans"/>
    <property type="match status" value="1"/>
</dbReference>
<dbReference type="Pfam" id="PF00172">
    <property type="entry name" value="Zn_clus"/>
    <property type="match status" value="1"/>
</dbReference>
<dbReference type="SMART" id="SM00906">
    <property type="entry name" value="Fungal_trans"/>
    <property type="match status" value="1"/>
</dbReference>
<dbReference type="SMART" id="SM00066">
    <property type="entry name" value="GAL4"/>
    <property type="match status" value="1"/>
</dbReference>
<dbReference type="SUPFAM" id="SSF57701">
    <property type="entry name" value="Zn2/Cys6 DNA-binding domain"/>
    <property type="match status" value="1"/>
</dbReference>
<accession>J4KLU1</accession>
<reference key="1">
    <citation type="journal article" date="2012" name="Sci. Rep.">
        <title>Genomic perspectives on the evolution of fungal entomopathogenicity in Beauveria bassiana.</title>
        <authorList>
            <person name="Xiao G."/>
            <person name="Ying S.-H."/>
            <person name="Zheng P."/>
            <person name="Wang Z.-L."/>
            <person name="Zhang S."/>
            <person name="Xie X.-Q."/>
            <person name="Shang Y."/>
            <person name="St Leger R.J."/>
            <person name="Zhao G.-P."/>
            <person name="Wang C."/>
            <person name="Feng M.-G."/>
        </authorList>
    </citation>
    <scope>NUCLEOTIDE SEQUENCE [LARGE SCALE GENOMIC DNA]</scope>
    <source>
        <strain>ARSEF 2860</strain>
    </source>
</reference>
<reference key="2">
    <citation type="journal article" date="2015" name="Proc. Natl. Acad. Sci. U.S.A.">
        <title>Fungal biosynthesis of the bibenzoquinone oosporein to evade insect immunity.</title>
        <authorList>
            <person name="Feng P."/>
            <person name="Shang Y."/>
            <person name="Cen K."/>
            <person name="Wang C."/>
        </authorList>
    </citation>
    <scope>FUNCTION</scope>
    <scope>DISRUPTION PHENOTYPE</scope>
</reference>
<feature type="chain" id="PRO_0000438574" description="Oosporein cluster regulator OpS3">
    <location>
        <begin position="1"/>
        <end position="741"/>
    </location>
</feature>
<feature type="DNA-binding region" description="Zn(2)-C6 fungal-type" evidence="2">
    <location>
        <begin position="44"/>
        <end position="69"/>
    </location>
</feature>
<feature type="region of interest" description="Disordered" evidence="3">
    <location>
        <begin position="16"/>
        <end position="39"/>
    </location>
</feature>
<feature type="region of interest" description="Disordered" evidence="3">
    <location>
        <begin position="139"/>
        <end position="167"/>
    </location>
</feature>
<feature type="region of interest" description="Disordered" evidence="3">
    <location>
        <begin position="501"/>
        <end position="528"/>
    </location>
</feature>
<feature type="coiled-coil region" evidence="1">
    <location>
        <begin position="473"/>
        <end position="500"/>
    </location>
</feature>
<feature type="compositionally biased region" description="Low complexity" evidence="3">
    <location>
        <begin position="20"/>
        <end position="34"/>
    </location>
</feature>
<feature type="compositionally biased region" description="Polar residues" evidence="3">
    <location>
        <begin position="506"/>
        <end position="528"/>
    </location>
</feature>
<evidence type="ECO:0000255" key="1"/>
<evidence type="ECO:0000255" key="2">
    <source>
        <dbReference type="PROSITE-ProRule" id="PRU00227"/>
    </source>
</evidence>
<evidence type="ECO:0000256" key="3">
    <source>
        <dbReference type="SAM" id="MobiDB-lite"/>
    </source>
</evidence>
<evidence type="ECO:0000269" key="4">
    <source>
    </source>
</evidence>
<evidence type="ECO:0000303" key="5">
    <source>
    </source>
</evidence>
<organism>
    <name type="scientific">Beauveria bassiana (strain ARSEF 2860)</name>
    <name type="common">White muscardine disease fungus</name>
    <name type="synonym">Tritirachium shiotae</name>
    <dbReference type="NCBI Taxonomy" id="655819"/>
    <lineage>
        <taxon>Eukaryota</taxon>
        <taxon>Fungi</taxon>
        <taxon>Dikarya</taxon>
        <taxon>Ascomycota</taxon>
        <taxon>Pezizomycotina</taxon>
        <taxon>Sordariomycetes</taxon>
        <taxon>Hypocreomycetidae</taxon>
        <taxon>Hypocreales</taxon>
        <taxon>Cordycipitaceae</taxon>
        <taxon>Beauveria</taxon>
    </lineage>
</organism>
<keyword id="KW-0175">Coiled coil</keyword>
<keyword id="KW-0238">DNA-binding</keyword>
<keyword id="KW-0479">Metal-binding</keyword>
<keyword id="KW-0539">Nucleus</keyword>
<keyword id="KW-1185">Reference proteome</keyword>
<keyword id="KW-0843">Virulence</keyword>
<keyword id="KW-0862">Zinc</keyword>
<protein>
    <recommendedName>
        <fullName evidence="5">Oosporein cluster regulator OpS3</fullName>
    </recommendedName>
    <alternativeName>
        <fullName evidence="5">Oosporein biosynthesis protein 3</fullName>
    </alternativeName>
</protein>